<sequence length="153" mass="17315">MNKETKLQVEAIKNGTVIDHIPAQVGIKVLKLFDMHNSSQRVTIGLNLPSSALGNKDLLKIENVFINEEQASKLALYAPHATVNQIEDYQVVKKLALELPEFVSDVFECPNTNCITHNEPVASNFRVFEKKGDVRLKCKYCEKVFSREIVTER</sequence>
<organism>
    <name type="scientific">Vibrio vulnificus (strain CMCP6)</name>
    <dbReference type="NCBI Taxonomy" id="216895"/>
    <lineage>
        <taxon>Bacteria</taxon>
        <taxon>Pseudomonadati</taxon>
        <taxon>Pseudomonadota</taxon>
        <taxon>Gammaproteobacteria</taxon>
        <taxon>Vibrionales</taxon>
        <taxon>Vibrionaceae</taxon>
        <taxon>Vibrio</taxon>
    </lineage>
</organism>
<gene>
    <name evidence="1" type="primary">pyrI</name>
    <name type="ordered locus">VV1_1464</name>
</gene>
<dbReference type="EMBL" id="AE016795">
    <property type="protein sequence ID" value="AAO09903.1"/>
    <property type="molecule type" value="Genomic_DNA"/>
</dbReference>
<dbReference type="RefSeq" id="WP_011079421.1">
    <property type="nucleotide sequence ID" value="NC_004459.3"/>
</dbReference>
<dbReference type="SMR" id="Q8DCF7"/>
<dbReference type="GeneID" id="93895724"/>
<dbReference type="KEGG" id="vvu:VV1_1464"/>
<dbReference type="HOGENOM" id="CLU_128576_0_0_6"/>
<dbReference type="Proteomes" id="UP000002275">
    <property type="component" value="Chromosome 1"/>
</dbReference>
<dbReference type="GO" id="GO:0009347">
    <property type="term" value="C:aspartate carbamoyltransferase complex"/>
    <property type="evidence" value="ECO:0007669"/>
    <property type="project" value="InterPro"/>
</dbReference>
<dbReference type="GO" id="GO:0046872">
    <property type="term" value="F:metal ion binding"/>
    <property type="evidence" value="ECO:0007669"/>
    <property type="project" value="UniProtKB-KW"/>
</dbReference>
<dbReference type="GO" id="GO:0006207">
    <property type="term" value="P:'de novo' pyrimidine nucleobase biosynthetic process"/>
    <property type="evidence" value="ECO:0007669"/>
    <property type="project" value="InterPro"/>
</dbReference>
<dbReference type="GO" id="GO:0006221">
    <property type="term" value="P:pyrimidine nucleotide biosynthetic process"/>
    <property type="evidence" value="ECO:0007669"/>
    <property type="project" value="UniProtKB-UniRule"/>
</dbReference>
<dbReference type="Gene3D" id="2.30.30.20">
    <property type="entry name" value="Aspartate carbamoyltransferase regulatory subunit, C-terminal domain"/>
    <property type="match status" value="1"/>
</dbReference>
<dbReference type="Gene3D" id="3.30.70.140">
    <property type="entry name" value="Aspartate carbamoyltransferase regulatory subunit, N-terminal domain"/>
    <property type="match status" value="1"/>
</dbReference>
<dbReference type="HAMAP" id="MF_00002">
    <property type="entry name" value="Asp_carb_tr_reg"/>
    <property type="match status" value="1"/>
</dbReference>
<dbReference type="InterPro" id="IPR020545">
    <property type="entry name" value="Asp_carbamoyltransf_reg_N"/>
</dbReference>
<dbReference type="InterPro" id="IPR002801">
    <property type="entry name" value="Asp_carbamoylTrfase_reg"/>
</dbReference>
<dbReference type="InterPro" id="IPR020542">
    <property type="entry name" value="Asp_carbamoyltrfase_reg_C"/>
</dbReference>
<dbReference type="InterPro" id="IPR036792">
    <property type="entry name" value="Asp_carbatrfase_reg_C_sf"/>
</dbReference>
<dbReference type="InterPro" id="IPR036793">
    <property type="entry name" value="Asp_carbatrfase_reg_N_sf"/>
</dbReference>
<dbReference type="NCBIfam" id="TIGR00240">
    <property type="entry name" value="ATCase_reg"/>
    <property type="match status" value="1"/>
</dbReference>
<dbReference type="PANTHER" id="PTHR35805">
    <property type="entry name" value="ASPARTATE CARBAMOYLTRANSFERASE REGULATORY CHAIN"/>
    <property type="match status" value="1"/>
</dbReference>
<dbReference type="PANTHER" id="PTHR35805:SF1">
    <property type="entry name" value="ASPARTATE CARBAMOYLTRANSFERASE REGULATORY CHAIN"/>
    <property type="match status" value="1"/>
</dbReference>
<dbReference type="Pfam" id="PF01948">
    <property type="entry name" value="PyrI"/>
    <property type="match status" value="1"/>
</dbReference>
<dbReference type="Pfam" id="PF02748">
    <property type="entry name" value="PyrI_C"/>
    <property type="match status" value="1"/>
</dbReference>
<dbReference type="SUPFAM" id="SSF57825">
    <property type="entry name" value="Aspartate carbamoyltransferase, Regulatory-chain, C-terminal domain"/>
    <property type="match status" value="1"/>
</dbReference>
<dbReference type="SUPFAM" id="SSF54893">
    <property type="entry name" value="Aspartate carbamoyltransferase, Regulatory-chain, N-terminal domain"/>
    <property type="match status" value="1"/>
</dbReference>
<keyword id="KW-0479">Metal-binding</keyword>
<keyword id="KW-0665">Pyrimidine biosynthesis</keyword>
<keyword id="KW-0862">Zinc</keyword>
<accession>Q8DCF7</accession>
<reference key="1">
    <citation type="submission" date="2002-12" db="EMBL/GenBank/DDBJ databases">
        <title>Complete genome sequence of Vibrio vulnificus CMCP6.</title>
        <authorList>
            <person name="Rhee J.H."/>
            <person name="Kim S.Y."/>
            <person name="Chung S.S."/>
            <person name="Kim J.J."/>
            <person name="Moon Y.H."/>
            <person name="Jeong H."/>
            <person name="Choy H.E."/>
        </authorList>
    </citation>
    <scope>NUCLEOTIDE SEQUENCE [LARGE SCALE GENOMIC DNA]</scope>
    <source>
        <strain>CMCP6</strain>
    </source>
</reference>
<protein>
    <recommendedName>
        <fullName evidence="1">Aspartate carbamoyltransferase regulatory chain</fullName>
    </recommendedName>
</protein>
<comment type="function">
    <text evidence="1">Involved in allosteric regulation of aspartate carbamoyltransferase.</text>
</comment>
<comment type="cofactor">
    <cofactor evidence="1">
        <name>Zn(2+)</name>
        <dbReference type="ChEBI" id="CHEBI:29105"/>
    </cofactor>
    <text evidence="1">Binds 1 zinc ion per subunit.</text>
</comment>
<comment type="subunit">
    <text evidence="1">Contains catalytic and regulatory chains.</text>
</comment>
<comment type="similarity">
    <text evidence="1">Belongs to the PyrI family.</text>
</comment>
<evidence type="ECO:0000255" key="1">
    <source>
        <dbReference type="HAMAP-Rule" id="MF_00002"/>
    </source>
</evidence>
<feature type="chain" id="PRO_0000142321" description="Aspartate carbamoyltransferase regulatory chain">
    <location>
        <begin position="1"/>
        <end position="153"/>
    </location>
</feature>
<feature type="binding site" evidence="1">
    <location>
        <position position="109"/>
    </location>
    <ligand>
        <name>Zn(2+)</name>
        <dbReference type="ChEBI" id="CHEBI:29105"/>
    </ligand>
</feature>
<feature type="binding site" evidence="1">
    <location>
        <position position="114"/>
    </location>
    <ligand>
        <name>Zn(2+)</name>
        <dbReference type="ChEBI" id="CHEBI:29105"/>
    </ligand>
</feature>
<feature type="binding site" evidence="1">
    <location>
        <position position="138"/>
    </location>
    <ligand>
        <name>Zn(2+)</name>
        <dbReference type="ChEBI" id="CHEBI:29105"/>
    </ligand>
</feature>
<feature type="binding site" evidence="1">
    <location>
        <position position="141"/>
    </location>
    <ligand>
        <name>Zn(2+)</name>
        <dbReference type="ChEBI" id="CHEBI:29105"/>
    </ligand>
</feature>
<name>PYRI_VIBVU</name>
<proteinExistence type="inferred from homology"/>